<comment type="catalytic activity">
    <reaction>
        <text>Transfers a segment of a (1-&gt;4)-alpha-D-glucan to a new position in an acceptor, which may be glucose or a (1-&gt;4)-alpha-D-glucan.</text>
        <dbReference type="EC" id="2.4.1.25"/>
    </reaction>
</comment>
<comment type="subcellular location">
    <subcellularLocation>
        <location evidence="1">Cytoplasm</location>
    </subcellularLocation>
</comment>
<comment type="similarity">
    <text evidence="2">Belongs to the disproportionating enzyme family.</text>
</comment>
<gene>
    <name type="primary">malQ</name>
    <name type="ordered locus">TC_0362</name>
</gene>
<keyword id="KW-0119">Carbohydrate metabolism</keyword>
<keyword id="KW-0963">Cytoplasm</keyword>
<keyword id="KW-0328">Glycosyltransferase</keyword>
<keyword id="KW-0808">Transferase</keyword>
<evidence type="ECO:0000250" key="1"/>
<evidence type="ECO:0000305" key="2"/>
<dbReference type="EC" id="2.4.1.25"/>
<dbReference type="EMBL" id="AE002160">
    <property type="protein sequence ID" value="AAF39223.1"/>
    <property type="molecule type" value="Genomic_DNA"/>
</dbReference>
<dbReference type="PIR" id="A81712">
    <property type="entry name" value="A81712"/>
</dbReference>
<dbReference type="RefSeq" id="WP_010230247.1">
    <property type="nucleotide sequence ID" value="NZ_CP063055.1"/>
</dbReference>
<dbReference type="SMR" id="Q9PKU9"/>
<dbReference type="CAZy" id="GH77">
    <property type="family name" value="Glycoside Hydrolase Family 77"/>
</dbReference>
<dbReference type="GeneID" id="1245715"/>
<dbReference type="KEGG" id="cmu:TC_0362"/>
<dbReference type="eggNOG" id="COG1640">
    <property type="taxonomic scope" value="Bacteria"/>
</dbReference>
<dbReference type="HOGENOM" id="CLU_014132_2_1_0"/>
<dbReference type="OrthoDB" id="9811841at2"/>
<dbReference type="Proteomes" id="UP000000800">
    <property type="component" value="Chromosome"/>
</dbReference>
<dbReference type="GO" id="GO:0005737">
    <property type="term" value="C:cytoplasm"/>
    <property type="evidence" value="ECO:0007669"/>
    <property type="project" value="UniProtKB-SubCell"/>
</dbReference>
<dbReference type="GO" id="GO:0004134">
    <property type="term" value="F:4-alpha-glucanotransferase activity"/>
    <property type="evidence" value="ECO:0007669"/>
    <property type="project" value="UniProtKB-EC"/>
</dbReference>
<dbReference type="GO" id="GO:0005975">
    <property type="term" value="P:carbohydrate metabolic process"/>
    <property type="evidence" value="ECO:0007669"/>
    <property type="project" value="InterPro"/>
</dbReference>
<dbReference type="Gene3D" id="3.20.20.80">
    <property type="entry name" value="Glycosidases"/>
    <property type="match status" value="1"/>
</dbReference>
<dbReference type="InterPro" id="IPR003385">
    <property type="entry name" value="Glyco_hydro_77"/>
</dbReference>
<dbReference type="InterPro" id="IPR017853">
    <property type="entry name" value="Glycoside_hydrolase_SF"/>
</dbReference>
<dbReference type="NCBIfam" id="NF011081">
    <property type="entry name" value="PRK14508.1-4"/>
    <property type="match status" value="1"/>
</dbReference>
<dbReference type="PANTHER" id="PTHR32518">
    <property type="match status" value="1"/>
</dbReference>
<dbReference type="PANTHER" id="PTHR32518:SF3">
    <property type="entry name" value="4-ALPHA-GLUCANOTRANSFERASE"/>
    <property type="match status" value="1"/>
</dbReference>
<dbReference type="Pfam" id="PF02446">
    <property type="entry name" value="Glyco_hydro_77"/>
    <property type="match status" value="1"/>
</dbReference>
<dbReference type="SUPFAM" id="SSF51445">
    <property type="entry name" value="(Trans)glycosidases"/>
    <property type="match status" value="1"/>
</dbReference>
<name>MALQ_CHLMU</name>
<feature type="chain" id="PRO_0000170120" description="4-alpha-glucanotransferase">
    <location>
        <begin position="1"/>
        <end position="527"/>
    </location>
</feature>
<proteinExistence type="inferred from homology"/>
<accession>Q9PKU9</accession>
<sequence length="527" mass="61329">MPLLSRSLRIIQNSPIRKVWNQVDTSPKHGICVPLFSIHTQNSCGIGEFLDLIPMIDWCTLCGFQILQILPINDTGSCSSPYNSISSISLNPLHLSISALPYKEEVSSSRKLIQEMQRLSQLSQVNYEKVIPMKRAFFKEYFRVCKSKNLTNHPDFCDFCEREKYWLHPYALFCSIREHLNYLPINHWSTTYTDLSYISQHEHTFAKDIEFYSYLQYLCFEQMKQVRKHADHKGCLIKGDIPILISKDSCDVWFYRKYFSSSESVGSPPDFYNAEGQNWNLPIYNMKTLRQDAYHWWKERLRYAENFYSLYRLDHVVGLFRFWVWDELGRGRFEPQDPKDYLDQGTDILSHLLKASSMLPIGEDLGTIPVDVKQALESLAVCGTRIPRWERDWEGTGAYIPFDQYNPLSVTSLSTHDSSTLALWWQEAPQEARLFAQFLGMPYTPSLSFHNHKEILKLSHKTSSIFHINLINDYLALCPDLISTNPLQERINLPGTISKNNWVYRVKPSIEQLSAHSKLNSLLASLF</sequence>
<protein>
    <recommendedName>
        <fullName>4-alpha-glucanotransferase</fullName>
        <ecNumber>2.4.1.25</ecNumber>
    </recommendedName>
    <alternativeName>
        <fullName>Amylomaltase</fullName>
    </alternativeName>
    <alternativeName>
        <fullName>Disproportionating enzyme</fullName>
        <shortName>D-enzyme</shortName>
    </alternativeName>
</protein>
<organism>
    <name type="scientific">Chlamydia muridarum (strain MoPn / Nigg)</name>
    <dbReference type="NCBI Taxonomy" id="243161"/>
    <lineage>
        <taxon>Bacteria</taxon>
        <taxon>Pseudomonadati</taxon>
        <taxon>Chlamydiota</taxon>
        <taxon>Chlamydiia</taxon>
        <taxon>Chlamydiales</taxon>
        <taxon>Chlamydiaceae</taxon>
        <taxon>Chlamydia/Chlamydophila group</taxon>
        <taxon>Chlamydia</taxon>
    </lineage>
</organism>
<reference key="1">
    <citation type="journal article" date="2000" name="Nucleic Acids Res.">
        <title>Genome sequences of Chlamydia trachomatis MoPn and Chlamydia pneumoniae AR39.</title>
        <authorList>
            <person name="Read T.D."/>
            <person name="Brunham R.C."/>
            <person name="Shen C."/>
            <person name="Gill S.R."/>
            <person name="Heidelberg J.F."/>
            <person name="White O."/>
            <person name="Hickey E.K."/>
            <person name="Peterson J.D."/>
            <person name="Utterback T.R."/>
            <person name="Berry K.J."/>
            <person name="Bass S."/>
            <person name="Linher K.D."/>
            <person name="Weidman J.F."/>
            <person name="Khouri H.M."/>
            <person name="Craven B."/>
            <person name="Bowman C."/>
            <person name="Dodson R.J."/>
            <person name="Gwinn M.L."/>
            <person name="Nelson W.C."/>
            <person name="DeBoy R.T."/>
            <person name="Kolonay J.F."/>
            <person name="McClarty G."/>
            <person name="Salzberg S.L."/>
            <person name="Eisen J.A."/>
            <person name="Fraser C.M."/>
        </authorList>
    </citation>
    <scope>NUCLEOTIDE SEQUENCE [LARGE SCALE GENOMIC DNA]</scope>
    <source>
        <strain>MoPn / Nigg</strain>
    </source>
</reference>